<name>F16PA_SHIDS</name>
<evidence type="ECO:0000255" key="1">
    <source>
        <dbReference type="HAMAP-Rule" id="MF_01855"/>
    </source>
</evidence>
<sequence>MKTLGEFIVEKQHEFSHATGELTALLSAIKLGAKIIHRDINKAGLVDILGASGAENVQGEVQQKLDLFANEKLKAALKARDIVAGIASEEEDEIVVFEGCEHAKYVVLMDPLDGSSNIDVNVSVGTIFSIYRRVTPVGTPVTEEDFLQPGNKQVAAGYVVYGSSTMLVYTTGCGVHAFTYDPSLGVFCLCQERMRFPEKGKTYSINEGNYIKFPNGVKKYIKFCQEEDKSTNRPYTSRYIGSLVADFHRNLLKGGIYLYPSTASHPDGKLRLLYECNPMAFLAEQAGGKASDGKERILDIIPETLHQRRSFFVGNDHMVEDVERFIREFPDA</sequence>
<keyword id="KW-0119">Carbohydrate metabolism</keyword>
<keyword id="KW-0963">Cytoplasm</keyword>
<keyword id="KW-0378">Hydrolase</keyword>
<keyword id="KW-0460">Magnesium</keyword>
<keyword id="KW-0479">Metal-binding</keyword>
<keyword id="KW-1185">Reference proteome</keyword>
<dbReference type="EC" id="3.1.3.11" evidence="1"/>
<dbReference type="EMBL" id="CP000034">
    <property type="protein sequence ID" value="ABB64151.1"/>
    <property type="molecule type" value="Genomic_DNA"/>
</dbReference>
<dbReference type="RefSeq" id="WP_000853753.1">
    <property type="nucleotide sequence ID" value="NC_007606.1"/>
</dbReference>
<dbReference type="RefSeq" id="YP_405642.1">
    <property type="nucleotide sequence ID" value="NC_007606.1"/>
</dbReference>
<dbReference type="SMR" id="Q328V4"/>
<dbReference type="STRING" id="300267.SDY_4250"/>
<dbReference type="EnsemblBacteria" id="ABB64151">
    <property type="protein sequence ID" value="ABB64151"/>
    <property type="gene ID" value="SDY_4250"/>
</dbReference>
<dbReference type="GeneID" id="86861371"/>
<dbReference type="KEGG" id="sdy:SDY_4250"/>
<dbReference type="PATRIC" id="fig|300267.13.peg.5011"/>
<dbReference type="HOGENOM" id="CLU_039977_2_2_6"/>
<dbReference type="UniPathway" id="UPA00138"/>
<dbReference type="Proteomes" id="UP000002716">
    <property type="component" value="Chromosome"/>
</dbReference>
<dbReference type="GO" id="GO:0005829">
    <property type="term" value="C:cytosol"/>
    <property type="evidence" value="ECO:0007669"/>
    <property type="project" value="TreeGrafter"/>
</dbReference>
<dbReference type="GO" id="GO:0042132">
    <property type="term" value="F:fructose 1,6-bisphosphate 1-phosphatase activity"/>
    <property type="evidence" value="ECO:0007669"/>
    <property type="project" value="UniProtKB-UniRule"/>
</dbReference>
<dbReference type="GO" id="GO:0000287">
    <property type="term" value="F:magnesium ion binding"/>
    <property type="evidence" value="ECO:0007669"/>
    <property type="project" value="UniProtKB-UniRule"/>
</dbReference>
<dbReference type="GO" id="GO:0030388">
    <property type="term" value="P:fructose 1,6-bisphosphate metabolic process"/>
    <property type="evidence" value="ECO:0007669"/>
    <property type="project" value="TreeGrafter"/>
</dbReference>
<dbReference type="GO" id="GO:0006002">
    <property type="term" value="P:fructose 6-phosphate metabolic process"/>
    <property type="evidence" value="ECO:0007669"/>
    <property type="project" value="TreeGrafter"/>
</dbReference>
<dbReference type="GO" id="GO:0006000">
    <property type="term" value="P:fructose metabolic process"/>
    <property type="evidence" value="ECO:0007669"/>
    <property type="project" value="TreeGrafter"/>
</dbReference>
<dbReference type="GO" id="GO:0006094">
    <property type="term" value="P:gluconeogenesis"/>
    <property type="evidence" value="ECO:0007669"/>
    <property type="project" value="UniProtKB-UniRule"/>
</dbReference>
<dbReference type="GO" id="GO:0005986">
    <property type="term" value="P:sucrose biosynthetic process"/>
    <property type="evidence" value="ECO:0007669"/>
    <property type="project" value="TreeGrafter"/>
</dbReference>
<dbReference type="CDD" id="cd00354">
    <property type="entry name" value="FBPase"/>
    <property type="match status" value="1"/>
</dbReference>
<dbReference type="FunFam" id="3.30.540.10:FF:000002">
    <property type="entry name" value="Fructose-1,6-bisphosphatase class 1"/>
    <property type="match status" value="1"/>
</dbReference>
<dbReference type="FunFam" id="3.40.190.80:FF:000001">
    <property type="entry name" value="Fructose-1,6-bisphosphatase class 1"/>
    <property type="match status" value="1"/>
</dbReference>
<dbReference type="Gene3D" id="3.40.190.80">
    <property type="match status" value="1"/>
</dbReference>
<dbReference type="Gene3D" id="3.30.540.10">
    <property type="entry name" value="Fructose-1,6-Bisphosphatase, subunit A, domain 1"/>
    <property type="match status" value="1"/>
</dbReference>
<dbReference type="HAMAP" id="MF_01855">
    <property type="entry name" value="FBPase_class1"/>
    <property type="match status" value="1"/>
</dbReference>
<dbReference type="InterPro" id="IPR044015">
    <property type="entry name" value="FBPase_C_dom"/>
</dbReference>
<dbReference type="InterPro" id="IPR000146">
    <property type="entry name" value="FBPase_class-1"/>
</dbReference>
<dbReference type="InterPro" id="IPR033391">
    <property type="entry name" value="FBPase_N"/>
</dbReference>
<dbReference type="InterPro" id="IPR028343">
    <property type="entry name" value="FBPtase"/>
</dbReference>
<dbReference type="InterPro" id="IPR020548">
    <property type="entry name" value="Fructose_bisphosphatase_AS"/>
</dbReference>
<dbReference type="NCBIfam" id="NF006778">
    <property type="entry name" value="PRK09293.1-1"/>
    <property type="match status" value="1"/>
</dbReference>
<dbReference type="NCBIfam" id="NF006779">
    <property type="entry name" value="PRK09293.1-3"/>
    <property type="match status" value="1"/>
</dbReference>
<dbReference type="PANTHER" id="PTHR11556">
    <property type="entry name" value="FRUCTOSE-1,6-BISPHOSPHATASE-RELATED"/>
    <property type="match status" value="1"/>
</dbReference>
<dbReference type="PANTHER" id="PTHR11556:SF35">
    <property type="entry name" value="SEDOHEPTULOSE-1,7-BISPHOSPHATASE, CHLOROPLASTIC"/>
    <property type="match status" value="1"/>
</dbReference>
<dbReference type="Pfam" id="PF00316">
    <property type="entry name" value="FBPase"/>
    <property type="match status" value="1"/>
</dbReference>
<dbReference type="Pfam" id="PF18913">
    <property type="entry name" value="FBPase_C"/>
    <property type="match status" value="1"/>
</dbReference>
<dbReference type="PIRSF" id="PIRSF500210">
    <property type="entry name" value="FBPtase"/>
    <property type="match status" value="1"/>
</dbReference>
<dbReference type="PIRSF" id="PIRSF000904">
    <property type="entry name" value="FBPtase_SBPase"/>
    <property type="match status" value="1"/>
</dbReference>
<dbReference type="PRINTS" id="PR00115">
    <property type="entry name" value="F16BPHPHTASE"/>
</dbReference>
<dbReference type="SUPFAM" id="SSF56655">
    <property type="entry name" value="Carbohydrate phosphatase"/>
    <property type="match status" value="1"/>
</dbReference>
<dbReference type="PROSITE" id="PS00124">
    <property type="entry name" value="FBPASE"/>
    <property type="match status" value="1"/>
</dbReference>
<feature type="chain" id="PRO_0000364718" description="Fructose-1,6-bisphosphatase class 1">
    <location>
        <begin position="1"/>
        <end position="332"/>
    </location>
</feature>
<feature type="binding site" evidence="1">
    <location>
        <position position="89"/>
    </location>
    <ligand>
        <name>Mg(2+)</name>
        <dbReference type="ChEBI" id="CHEBI:18420"/>
        <label>1</label>
    </ligand>
</feature>
<feature type="binding site" evidence="1">
    <location>
        <position position="110"/>
    </location>
    <ligand>
        <name>Mg(2+)</name>
        <dbReference type="ChEBI" id="CHEBI:18420"/>
        <label>1</label>
    </ligand>
</feature>
<feature type="binding site" evidence="1">
    <location>
        <position position="110"/>
    </location>
    <ligand>
        <name>Mg(2+)</name>
        <dbReference type="ChEBI" id="CHEBI:18420"/>
        <label>2</label>
    </ligand>
</feature>
<feature type="binding site" evidence="1">
    <location>
        <position position="112"/>
    </location>
    <ligand>
        <name>Mg(2+)</name>
        <dbReference type="ChEBI" id="CHEBI:18420"/>
        <label>1</label>
    </ligand>
</feature>
<feature type="binding site" evidence="1">
    <location>
        <begin position="113"/>
        <end position="116"/>
    </location>
    <ligand>
        <name>substrate</name>
    </ligand>
</feature>
<feature type="binding site" evidence="1">
    <location>
        <position position="113"/>
    </location>
    <ligand>
        <name>Mg(2+)</name>
        <dbReference type="ChEBI" id="CHEBI:18420"/>
        <label>2</label>
    </ligand>
</feature>
<feature type="binding site" evidence="1">
    <location>
        <position position="206"/>
    </location>
    <ligand>
        <name>substrate</name>
    </ligand>
</feature>
<feature type="binding site" evidence="1">
    <location>
        <position position="239"/>
    </location>
    <ligand>
        <name>substrate</name>
    </ligand>
</feature>
<feature type="binding site" evidence="1">
    <location>
        <begin position="257"/>
        <end position="259"/>
    </location>
    <ligand>
        <name>substrate</name>
    </ligand>
</feature>
<feature type="binding site" evidence="1">
    <location>
        <position position="269"/>
    </location>
    <ligand>
        <name>substrate</name>
    </ligand>
</feature>
<feature type="binding site" evidence="1">
    <location>
        <position position="275"/>
    </location>
    <ligand>
        <name>Mg(2+)</name>
        <dbReference type="ChEBI" id="CHEBI:18420"/>
        <label>2</label>
    </ligand>
</feature>
<gene>
    <name evidence="1" type="primary">fbp</name>
    <name type="ordered locus">SDY_4250</name>
</gene>
<protein>
    <recommendedName>
        <fullName evidence="1">Fructose-1,6-bisphosphatase class 1</fullName>
        <shortName evidence="1">FBPase class 1</shortName>
        <ecNumber evidence="1">3.1.3.11</ecNumber>
    </recommendedName>
    <alternativeName>
        <fullName evidence="1">D-fructose-1,6-bisphosphate 1-phosphohydrolase class 1</fullName>
    </alternativeName>
</protein>
<organism>
    <name type="scientific">Shigella dysenteriae serotype 1 (strain Sd197)</name>
    <dbReference type="NCBI Taxonomy" id="300267"/>
    <lineage>
        <taxon>Bacteria</taxon>
        <taxon>Pseudomonadati</taxon>
        <taxon>Pseudomonadota</taxon>
        <taxon>Gammaproteobacteria</taxon>
        <taxon>Enterobacterales</taxon>
        <taxon>Enterobacteriaceae</taxon>
        <taxon>Shigella</taxon>
    </lineage>
</organism>
<reference key="1">
    <citation type="journal article" date="2005" name="Nucleic Acids Res.">
        <title>Genome dynamics and diversity of Shigella species, the etiologic agents of bacillary dysentery.</title>
        <authorList>
            <person name="Yang F."/>
            <person name="Yang J."/>
            <person name="Zhang X."/>
            <person name="Chen L."/>
            <person name="Jiang Y."/>
            <person name="Yan Y."/>
            <person name="Tang X."/>
            <person name="Wang J."/>
            <person name="Xiong Z."/>
            <person name="Dong J."/>
            <person name="Xue Y."/>
            <person name="Zhu Y."/>
            <person name="Xu X."/>
            <person name="Sun L."/>
            <person name="Chen S."/>
            <person name="Nie H."/>
            <person name="Peng J."/>
            <person name="Xu J."/>
            <person name="Wang Y."/>
            <person name="Yuan Z."/>
            <person name="Wen Y."/>
            <person name="Yao Z."/>
            <person name="Shen Y."/>
            <person name="Qiang B."/>
            <person name="Hou Y."/>
            <person name="Yu J."/>
            <person name="Jin Q."/>
        </authorList>
    </citation>
    <scope>NUCLEOTIDE SEQUENCE [LARGE SCALE GENOMIC DNA]</scope>
    <source>
        <strain>Sd197</strain>
    </source>
</reference>
<accession>Q328V4</accession>
<proteinExistence type="inferred from homology"/>
<comment type="catalytic activity">
    <reaction evidence="1">
        <text>beta-D-fructose 1,6-bisphosphate + H2O = beta-D-fructose 6-phosphate + phosphate</text>
        <dbReference type="Rhea" id="RHEA:11064"/>
        <dbReference type="ChEBI" id="CHEBI:15377"/>
        <dbReference type="ChEBI" id="CHEBI:32966"/>
        <dbReference type="ChEBI" id="CHEBI:43474"/>
        <dbReference type="ChEBI" id="CHEBI:57634"/>
        <dbReference type="EC" id="3.1.3.11"/>
    </reaction>
</comment>
<comment type="cofactor">
    <cofactor evidence="1">
        <name>Mg(2+)</name>
        <dbReference type="ChEBI" id="CHEBI:18420"/>
    </cofactor>
    <text evidence="1">Binds 2 magnesium ions per subunit.</text>
</comment>
<comment type="pathway">
    <text evidence="1">Carbohydrate biosynthesis; gluconeogenesis.</text>
</comment>
<comment type="subunit">
    <text evidence="1">Homotetramer.</text>
</comment>
<comment type="subcellular location">
    <subcellularLocation>
        <location evidence="1">Cytoplasm</location>
    </subcellularLocation>
</comment>
<comment type="similarity">
    <text evidence="1">Belongs to the FBPase class 1 family.</text>
</comment>